<protein>
    <recommendedName>
        <fullName evidence="1">Large ribosomal subunit protein uL30</fullName>
    </recommendedName>
    <alternativeName>
        <fullName evidence="2">50S ribosomal protein L30</fullName>
    </alternativeName>
</protein>
<name>RL30_PARDP</name>
<keyword id="KW-1185">Reference proteome</keyword>
<keyword id="KW-0687">Ribonucleoprotein</keyword>
<keyword id="KW-0689">Ribosomal protein</keyword>
<organism>
    <name type="scientific">Paracoccus denitrificans (strain Pd 1222)</name>
    <dbReference type="NCBI Taxonomy" id="318586"/>
    <lineage>
        <taxon>Bacteria</taxon>
        <taxon>Pseudomonadati</taxon>
        <taxon>Pseudomonadota</taxon>
        <taxon>Alphaproteobacteria</taxon>
        <taxon>Rhodobacterales</taxon>
        <taxon>Paracoccaceae</taxon>
        <taxon>Paracoccus</taxon>
    </lineage>
</organism>
<proteinExistence type="inferred from homology"/>
<gene>
    <name evidence="1" type="primary">rpmD</name>
    <name type="ordered locus">Pden_0777</name>
</gene>
<dbReference type="EMBL" id="CP000489">
    <property type="protein sequence ID" value="ABL68889.1"/>
    <property type="molecule type" value="Genomic_DNA"/>
</dbReference>
<dbReference type="RefSeq" id="WP_011747117.1">
    <property type="nucleotide sequence ID" value="NC_008686.1"/>
</dbReference>
<dbReference type="SMR" id="A1B045"/>
<dbReference type="STRING" id="318586.Pden_0777"/>
<dbReference type="EnsemblBacteria" id="ABL68889">
    <property type="protein sequence ID" value="ABL68889"/>
    <property type="gene ID" value="Pden_0777"/>
</dbReference>
<dbReference type="GeneID" id="78896659"/>
<dbReference type="GeneID" id="93452001"/>
<dbReference type="KEGG" id="pde:Pden_0777"/>
<dbReference type="eggNOG" id="COG1841">
    <property type="taxonomic scope" value="Bacteria"/>
</dbReference>
<dbReference type="HOGENOM" id="CLU_131047_1_2_5"/>
<dbReference type="OrthoDB" id="9812790at2"/>
<dbReference type="Proteomes" id="UP000000361">
    <property type="component" value="Chromosome 1"/>
</dbReference>
<dbReference type="GO" id="GO:0022625">
    <property type="term" value="C:cytosolic large ribosomal subunit"/>
    <property type="evidence" value="ECO:0007669"/>
    <property type="project" value="TreeGrafter"/>
</dbReference>
<dbReference type="GO" id="GO:0003735">
    <property type="term" value="F:structural constituent of ribosome"/>
    <property type="evidence" value="ECO:0007669"/>
    <property type="project" value="InterPro"/>
</dbReference>
<dbReference type="GO" id="GO:0006412">
    <property type="term" value="P:translation"/>
    <property type="evidence" value="ECO:0007669"/>
    <property type="project" value="UniProtKB-UniRule"/>
</dbReference>
<dbReference type="CDD" id="cd01658">
    <property type="entry name" value="Ribosomal_L30"/>
    <property type="match status" value="1"/>
</dbReference>
<dbReference type="Gene3D" id="3.30.1390.20">
    <property type="entry name" value="Ribosomal protein L30, ferredoxin-like fold domain"/>
    <property type="match status" value="1"/>
</dbReference>
<dbReference type="HAMAP" id="MF_01371_B">
    <property type="entry name" value="Ribosomal_uL30_B"/>
    <property type="match status" value="1"/>
</dbReference>
<dbReference type="InterPro" id="IPR036919">
    <property type="entry name" value="Ribo_uL30_ferredoxin-like_sf"/>
</dbReference>
<dbReference type="InterPro" id="IPR005996">
    <property type="entry name" value="Ribosomal_uL30_bac-type"/>
</dbReference>
<dbReference type="InterPro" id="IPR016082">
    <property type="entry name" value="Ribosomal_uL30_ferredoxin-like"/>
</dbReference>
<dbReference type="NCBIfam" id="TIGR01308">
    <property type="entry name" value="rpmD_bact"/>
    <property type="match status" value="1"/>
</dbReference>
<dbReference type="PANTHER" id="PTHR15892:SF2">
    <property type="entry name" value="LARGE RIBOSOMAL SUBUNIT PROTEIN UL30M"/>
    <property type="match status" value="1"/>
</dbReference>
<dbReference type="PANTHER" id="PTHR15892">
    <property type="entry name" value="MITOCHONDRIAL RIBOSOMAL PROTEIN L30"/>
    <property type="match status" value="1"/>
</dbReference>
<dbReference type="Pfam" id="PF00327">
    <property type="entry name" value="Ribosomal_L30"/>
    <property type="match status" value="1"/>
</dbReference>
<dbReference type="PIRSF" id="PIRSF002211">
    <property type="entry name" value="Ribosomal_L30_bac-type"/>
    <property type="match status" value="1"/>
</dbReference>
<dbReference type="SUPFAM" id="SSF55129">
    <property type="entry name" value="Ribosomal protein L30p/L7e"/>
    <property type="match status" value="1"/>
</dbReference>
<reference key="1">
    <citation type="submission" date="2006-12" db="EMBL/GenBank/DDBJ databases">
        <title>Complete sequence of chromosome 1 of Paracoccus denitrificans PD1222.</title>
        <authorList>
            <person name="Copeland A."/>
            <person name="Lucas S."/>
            <person name="Lapidus A."/>
            <person name="Barry K."/>
            <person name="Detter J.C."/>
            <person name="Glavina del Rio T."/>
            <person name="Hammon N."/>
            <person name="Israni S."/>
            <person name="Dalin E."/>
            <person name="Tice H."/>
            <person name="Pitluck S."/>
            <person name="Munk A.C."/>
            <person name="Brettin T."/>
            <person name="Bruce D."/>
            <person name="Han C."/>
            <person name="Tapia R."/>
            <person name="Gilna P."/>
            <person name="Schmutz J."/>
            <person name="Larimer F."/>
            <person name="Land M."/>
            <person name="Hauser L."/>
            <person name="Kyrpides N."/>
            <person name="Lykidis A."/>
            <person name="Spiro S."/>
            <person name="Richardson D.J."/>
            <person name="Moir J.W.B."/>
            <person name="Ferguson S.J."/>
            <person name="van Spanning R.J.M."/>
            <person name="Richardson P."/>
        </authorList>
    </citation>
    <scope>NUCLEOTIDE SEQUENCE [LARGE SCALE GENOMIC DNA]</scope>
    <source>
        <strain>Pd 1222</strain>
    </source>
</reference>
<feature type="chain" id="PRO_1000056086" description="Large ribosomal subunit protein uL30">
    <location>
        <begin position="1"/>
        <end position="62"/>
    </location>
</feature>
<comment type="subunit">
    <text evidence="1">Part of the 50S ribosomal subunit.</text>
</comment>
<comment type="similarity">
    <text evidence="1">Belongs to the universal ribosomal protein uL30 family.</text>
</comment>
<accession>A1B045</accession>
<evidence type="ECO:0000255" key="1">
    <source>
        <dbReference type="HAMAP-Rule" id="MF_01371"/>
    </source>
</evidence>
<evidence type="ECO:0000305" key="2"/>
<sequence length="62" mass="6902">MAKTIVVKQIGSPIRRPAIQRETLKGLGLNKMNRTRELEDTPAVRGMVAKIPHLAVIIEERG</sequence>